<dbReference type="EC" id="7.1.2.2" evidence="1"/>
<dbReference type="EMBL" id="AB002583">
    <property type="protein sequence ID" value="BAC76263.1"/>
    <property type="molecule type" value="Genomic_DNA"/>
</dbReference>
<dbReference type="RefSeq" id="NP_849101.1">
    <property type="nucleotide sequence ID" value="NC_004799.1"/>
</dbReference>
<dbReference type="SMR" id="Q85FT2"/>
<dbReference type="STRING" id="280699.Q85FT2"/>
<dbReference type="EnsemblPlants" id="CMV196CT">
    <property type="protein sequence ID" value="CMV196CT"/>
    <property type="gene ID" value="CMV196C"/>
</dbReference>
<dbReference type="GeneID" id="844866"/>
<dbReference type="Gramene" id="CMV196CT">
    <property type="protein sequence ID" value="CMV196CT"/>
    <property type="gene ID" value="CMV196C"/>
</dbReference>
<dbReference type="KEGG" id="cme:CymeCp169"/>
<dbReference type="eggNOG" id="KOG1350">
    <property type="taxonomic scope" value="Eukaryota"/>
</dbReference>
<dbReference type="HOGENOM" id="CLU_022398_0_2_1"/>
<dbReference type="Proteomes" id="UP000007014">
    <property type="component" value="Chloroplast"/>
</dbReference>
<dbReference type="GO" id="GO:0009535">
    <property type="term" value="C:chloroplast thylakoid membrane"/>
    <property type="evidence" value="ECO:0007669"/>
    <property type="project" value="UniProtKB-SubCell"/>
</dbReference>
<dbReference type="GO" id="GO:0005739">
    <property type="term" value="C:mitochondrion"/>
    <property type="evidence" value="ECO:0007669"/>
    <property type="project" value="GOC"/>
</dbReference>
<dbReference type="GO" id="GO:0045259">
    <property type="term" value="C:proton-transporting ATP synthase complex"/>
    <property type="evidence" value="ECO:0007669"/>
    <property type="project" value="UniProtKB-KW"/>
</dbReference>
<dbReference type="GO" id="GO:0005524">
    <property type="term" value="F:ATP binding"/>
    <property type="evidence" value="ECO:0007669"/>
    <property type="project" value="UniProtKB-UniRule"/>
</dbReference>
<dbReference type="GO" id="GO:0016887">
    <property type="term" value="F:ATP hydrolysis activity"/>
    <property type="evidence" value="ECO:0007669"/>
    <property type="project" value="InterPro"/>
</dbReference>
<dbReference type="GO" id="GO:0003729">
    <property type="term" value="F:mRNA binding"/>
    <property type="evidence" value="ECO:0007669"/>
    <property type="project" value="EnsemblPlants"/>
</dbReference>
<dbReference type="GO" id="GO:0046933">
    <property type="term" value="F:proton-transporting ATP synthase activity, rotational mechanism"/>
    <property type="evidence" value="ECO:0007669"/>
    <property type="project" value="UniProtKB-UniRule"/>
</dbReference>
<dbReference type="GO" id="GO:0050832">
    <property type="term" value="P:defense response to fungus"/>
    <property type="evidence" value="ECO:0007669"/>
    <property type="project" value="EnsemblPlants"/>
</dbReference>
<dbReference type="GO" id="GO:0042776">
    <property type="term" value="P:proton motive force-driven mitochondrial ATP synthesis"/>
    <property type="evidence" value="ECO:0007669"/>
    <property type="project" value="TreeGrafter"/>
</dbReference>
<dbReference type="GO" id="GO:0009409">
    <property type="term" value="P:response to cold"/>
    <property type="evidence" value="ECO:0007669"/>
    <property type="project" value="EnsemblPlants"/>
</dbReference>
<dbReference type="CDD" id="cd18110">
    <property type="entry name" value="ATP-synt_F1_beta_C"/>
    <property type="match status" value="1"/>
</dbReference>
<dbReference type="CDD" id="cd18115">
    <property type="entry name" value="ATP-synt_F1_beta_N"/>
    <property type="match status" value="1"/>
</dbReference>
<dbReference type="CDD" id="cd01133">
    <property type="entry name" value="F1-ATPase_beta_CD"/>
    <property type="match status" value="1"/>
</dbReference>
<dbReference type="FunFam" id="1.10.1140.10:FF:000001">
    <property type="entry name" value="ATP synthase subunit beta"/>
    <property type="match status" value="1"/>
</dbReference>
<dbReference type="FunFam" id="3.40.50.12240:FF:000006">
    <property type="entry name" value="ATP synthase subunit beta"/>
    <property type="match status" value="1"/>
</dbReference>
<dbReference type="FunFam" id="3.40.50.300:FF:000004">
    <property type="entry name" value="ATP synthase subunit beta"/>
    <property type="match status" value="1"/>
</dbReference>
<dbReference type="Gene3D" id="2.40.10.170">
    <property type="match status" value="1"/>
</dbReference>
<dbReference type="Gene3D" id="1.10.1140.10">
    <property type="entry name" value="Bovine Mitochondrial F1-atpase, Atp Synthase Beta Chain, Chain D, domain 3"/>
    <property type="match status" value="1"/>
</dbReference>
<dbReference type="Gene3D" id="3.40.50.300">
    <property type="entry name" value="P-loop containing nucleotide triphosphate hydrolases"/>
    <property type="match status" value="1"/>
</dbReference>
<dbReference type="HAMAP" id="MF_01347">
    <property type="entry name" value="ATP_synth_beta_bact"/>
    <property type="match status" value="1"/>
</dbReference>
<dbReference type="InterPro" id="IPR003593">
    <property type="entry name" value="AAA+_ATPase"/>
</dbReference>
<dbReference type="InterPro" id="IPR055190">
    <property type="entry name" value="ATP-synt_VA_C"/>
</dbReference>
<dbReference type="InterPro" id="IPR005722">
    <property type="entry name" value="ATP_synth_F1_bsu"/>
</dbReference>
<dbReference type="InterPro" id="IPR020003">
    <property type="entry name" value="ATPase_a/bsu_AS"/>
</dbReference>
<dbReference type="InterPro" id="IPR050053">
    <property type="entry name" value="ATPase_alpha/beta_chains"/>
</dbReference>
<dbReference type="InterPro" id="IPR004100">
    <property type="entry name" value="ATPase_F1/V1/A1_a/bsu_N"/>
</dbReference>
<dbReference type="InterPro" id="IPR036121">
    <property type="entry name" value="ATPase_F1/V1/A1_a/bsu_N_sf"/>
</dbReference>
<dbReference type="InterPro" id="IPR000194">
    <property type="entry name" value="ATPase_F1/V1/A1_a/bsu_nucl-bd"/>
</dbReference>
<dbReference type="InterPro" id="IPR024034">
    <property type="entry name" value="ATPase_F1/V1_b/a_C"/>
</dbReference>
<dbReference type="InterPro" id="IPR027417">
    <property type="entry name" value="P-loop_NTPase"/>
</dbReference>
<dbReference type="NCBIfam" id="TIGR01039">
    <property type="entry name" value="atpD"/>
    <property type="match status" value="1"/>
</dbReference>
<dbReference type="PANTHER" id="PTHR15184">
    <property type="entry name" value="ATP SYNTHASE"/>
    <property type="match status" value="1"/>
</dbReference>
<dbReference type="PANTHER" id="PTHR15184:SF71">
    <property type="entry name" value="ATP SYNTHASE SUBUNIT BETA, MITOCHONDRIAL"/>
    <property type="match status" value="1"/>
</dbReference>
<dbReference type="Pfam" id="PF00006">
    <property type="entry name" value="ATP-synt_ab"/>
    <property type="match status" value="1"/>
</dbReference>
<dbReference type="Pfam" id="PF02874">
    <property type="entry name" value="ATP-synt_ab_N"/>
    <property type="match status" value="1"/>
</dbReference>
<dbReference type="Pfam" id="PF22919">
    <property type="entry name" value="ATP-synt_VA_C"/>
    <property type="match status" value="1"/>
</dbReference>
<dbReference type="SMART" id="SM00382">
    <property type="entry name" value="AAA"/>
    <property type="match status" value="1"/>
</dbReference>
<dbReference type="SUPFAM" id="SSF47917">
    <property type="entry name" value="C-terminal domain of alpha and beta subunits of F1 ATP synthase"/>
    <property type="match status" value="1"/>
</dbReference>
<dbReference type="SUPFAM" id="SSF50615">
    <property type="entry name" value="N-terminal domain of alpha and beta subunits of F1 ATP synthase"/>
    <property type="match status" value="1"/>
</dbReference>
<dbReference type="SUPFAM" id="SSF52540">
    <property type="entry name" value="P-loop containing nucleoside triphosphate hydrolases"/>
    <property type="match status" value="1"/>
</dbReference>
<dbReference type="PROSITE" id="PS00152">
    <property type="entry name" value="ATPASE_ALPHA_BETA"/>
    <property type="match status" value="1"/>
</dbReference>
<name>ATPB_CYAM1</name>
<accession>Q85FT2</accession>
<feature type="chain" id="PRO_0000254470" description="ATP synthase subunit beta, chloroplastic">
    <location>
        <begin position="1"/>
        <end position="467"/>
    </location>
</feature>
<feature type="binding site" evidence="1">
    <location>
        <begin position="149"/>
        <end position="156"/>
    </location>
    <ligand>
        <name>ATP</name>
        <dbReference type="ChEBI" id="CHEBI:30616"/>
    </ligand>
</feature>
<evidence type="ECO:0000255" key="1">
    <source>
        <dbReference type="HAMAP-Rule" id="MF_01347"/>
    </source>
</evidence>
<keyword id="KW-0066">ATP synthesis</keyword>
<keyword id="KW-0067">ATP-binding</keyword>
<keyword id="KW-0139">CF(1)</keyword>
<keyword id="KW-0150">Chloroplast</keyword>
<keyword id="KW-0375">Hydrogen ion transport</keyword>
<keyword id="KW-0406">Ion transport</keyword>
<keyword id="KW-0472">Membrane</keyword>
<keyword id="KW-0547">Nucleotide-binding</keyword>
<keyword id="KW-0934">Plastid</keyword>
<keyword id="KW-1185">Reference proteome</keyword>
<keyword id="KW-0793">Thylakoid</keyword>
<keyword id="KW-1278">Translocase</keyword>
<keyword id="KW-0813">Transport</keyword>
<sequence>MSGKVVQIIGPVLDIEFPSGQLPKLLNAIVVRDGEKSVTCEVQQLLGDNRVRAIAMSSTDGLRRGIQAEDTGAPISVPVGKVTLGRIFNVLGDCVDNLGTVTRQAVQPIHKQAPSFVQLETKPSVFETGIKVVDLLAPYRRGGKIGLFGGAGVGKTVLIMELINNIAKAHGGVSVFAGVGERTREGNDLYEEMKASGVIQSQNLSESKVALCYGQMNEPPGARMRVGLTALTMAEHFRDINKQDVLLFIDNIFRFVQAGSEVSALLGRMPSAVGYQPTLATEMGALQERITSTVDGSITSIQAVYVPADDLTDPAPATTFAHLDATTVLSRGLAAKGIYPAVDPLDSTSTMLQPNIVGEAHYQTASRVKQTLQRYKELQDIIAILGLDELSEEDRLLVARARKIERFLSQPFFVAEVFTGSPGKYVSLEESIKGFKMILDGELDDLPEQAFYLVGNIEEAIQKAQKL</sequence>
<gene>
    <name evidence="1" type="primary">atpB</name>
</gene>
<organism>
    <name type="scientific">Cyanidioschyzon merolae (strain NIES-3377 / 10D)</name>
    <name type="common">Unicellular red alga</name>
    <dbReference type="NCBI Taxonomy" id="280699"/>
    <lineage>
        <taxon>Eukaryota</taxon>
        <taxon>Rhodophyta</taxon>
        <taxon>Bangiophyceae</taxon>
        <taxon>Cyanidiales</taxon>
        <taxon>Cyanidiaceae</taxon>
        <taxon>Cyanidioschyzon</taxon>
    </lineage>
</organism>
<comment type="function">
    <text evidence="1">Produces ATP from ADP in the presence of a proton gradient across the membrane. The catalytic sites are hosted primarily by the beta subunits.</text>
</comment>
<comment type="catalytic activity">
    <reaction evidence="1">
        <text>ATP + H2O + 4 H(+)(in) = ADP + phosphate + 5 H(+)(out)</text>
        <dbReference type="Rhea" id="RHEA:57720"/>
        <dbReference type="ChEBI" id="CHEBI:15377"/>
        <dbReference type="ChEBI" id="CHEBI:15378"/>
        <dbReference type="ChEBI" id="CHEBI:30616"/>
        <dbReference type="ChEBI" id="CHEBI:43474"/>
        <dbReference type="ChEBI" id="CHEBI:456216"/>
        <dbReference type="EC" id="7.1.2.2"/>
    </reaction>
</comment>
<comment type="subunit">
    <text evidence="1">F-type ATPases have 2 components, CF(1) - the catalytic core - and CF(0) - the membrane proton channel. CF(1) has five subunits: alpha(3), beta(3), gamma(1), delta(1), epsilon(1). CF(0) has four main subunits: a(1), b(1), b'(1) and c(9-12).</text>
</comment>
<comment type="subcellular location">
    <subcellularLocation>
        <location evidence="1">Plastid</location>
        <location evidence="1">Chloroplast thylakoid membrane</location>
        <topology evidence="1">Peripheral membrane protein</topology>
    </subcellularLocation>
</comment>
<comment type="similarity">
    <text evidence="1">Belongs to the ATPase alpha/beta chains family.</text>
</comment>
<reference key="1">
    <citation type="journal article" date="2003" name="DNA Res.">
        <title>Complete sequence and analysis of the plastid genome of the unicellular red alga Cyanidioschyzon merolae.</title>
        <authorList>
            <person name="Ohta N."/>
            <person name="Matsuzaki M."/>
            <person name="Misumi O."/>
            <person name="Miyagishima S.-Y."/>
            <person name="Nozaki H."/>
            <person name="Tanaka K."/>
            <person name="Shin-i T."/>
            <person name="Kohara Y."/>
            <person name="Kuroiwa T."/>
        </authorList>
    </citation>
    <scope>NUCLEOTIDE SEQUENCE [LARGE SCALE GENOMIC DNA]</scope>
    <source>
        <strain>NIES-3377 / 10D</strain>
    </source>
</reference>
<geneLocation type="chloroplast"/>
<protein>
    <recommendedName>
        <fullName evidence="1">ATP synthase subunit beta, chloroplastic</fullName>
        <ecNumber evidence="1">7.1.2.2</ecNumber>
    </recommendedName>
    <alternativeName>
        <fullName evidence="1">ATP synthase F1 sector subunit beta</fullName>
    </alternativeName>
    <alternativeName>
        <fullName evidence="1">F-ATPase subunit beta</fullName>
    </alternativeName>
</protein>
<proteinExistence type="inferred from homology"/>